<reference key="1">
    <citation type="journal article" date="2005" name="Science">
        <title>The transcriptional landscape of the mammalian genome.</title>
        <authorList>
            <person name="Carninci P."/>
            <person name="Kasukawa T."/>
            <person name="Katayama S."/>
            <person name="Gough J."/>
            <person name="Frith M.C."/>
            <person name="Maeda N."/>
            <person name="Oyama R."/>
            <person name="Ravasi T."/>
            <person name="Lenhard B."/>
            <person name="Wells C."/>
            <person name="Kodzius R."/>
            <person name="Shimokawa K."/>
            <person name="Bajic V.B."/>
            <person name="Brenner S.E."/>
            <person name="Batalov S."/>
            <person name="Forrest A.R."/>
            <person name="Zavolan M."/>
            <person name="Davis M.J."/>
            <person name="Wilming L.G."/>
            <person name="Aidinis V."/>
            <person name="Allen J.E."/>
            <person name="Ambesi-Impiombato A."/>
            <person name="Apweiler R."/>
            <person name="Aturaliya R.N."/>
            <person name="Bailey T.L."/>
            <person name="Bansal M."/>
            <person name="Baxter L."/>
            <person name="Beisel K.W."/>
            <person name="Bersano T."/>
            <person name="Bono H."/>
            <person name="Chalk A.M."/>
            <person name="Chiu K.P."/>
            <person name="Choudhary V."/>
            <person name="Christoffels A."/>
            <person name="Clutterbuck D.R."/>
            <person name="Crowe M.L."/>
            <person name="Dalla E."/>
            <person name="Dalrymple B.P."/>
            <person name="de Bono B."/>
            <person name="Della Gatta G."/>
            <person name="di Bernardo D."/>
            <person name="Down T."/>
            <person name="Engstrom P."/>
            <person name="Fagiolini M."/>
            <person name="Faulkner G."/>
            <person name="Fletcher C.F."/>
            <person name="Fukushima T."/>
            <person name="Furuno M."/>
            <person name="Futaki S."/>
            <person name="Gariboldi M."/>
            <person name="Georgii-Hemming P."/>
            <person name="Gingeras T.R."/>
            <person name="Gojobori T."/>
            <person name="Green R.E."/>
            <person name="Gustincich S."/>
            <person name="Harbers M."/>
            <person name="Hayashi Y."/>
            <person name="Hensch T.K."/>
            <person name="Hirokawa N."/>
            <person name="Hill D."/>
            <person name="Huminiecki L."/>
            <person name="Iacono M."/>
            <person name="Ikeo K."/>
            <person name="Iwama A."/>
            <person name="Ishikawa T."/>
            <person name="Jakt M."/>
            <person name="Kanapin A."/>
            <person name="Katoh M."/>
            <person name="Kawasawa Y."/>
            <person name="Kelso J."/>
            <person name="Kitamura H."/>
            <person name="Kitano H."/>
            <person name="Kollias G."/>
            <person name="Krishnan S.P."/>
            <person name="Kruger A."/>
            <person name="Kummerfeld S.K."/>
            <person name="Kurochkin I.V."/>
            <person name="Lareau L.F."/>
            <person name="Lazarevic D."/>
            <person name="Lipovich L."/>
            <person name="Liu J."/>
            <person name="Liuni S."/>
            <person name="McWilliam S."/>
            <person name="Madan Babu M."/>
            <person name="Madera M."/>
            <person name="Marchionni L."/>
            <person name="Matsuda H."/>
            <person name="Matsuzawa S."/>
            <person name="Miki H."/>
            <person name="Mignone F."/>
            <person name="Miyake S."/>
            <person name="Morris K."/>
            <person name="Mottagui-Tabar S."/>
            <person name="Mulder N."/>
            <person name="Nakano N."/>
            <person name="Nakauchi H."/>
            <person name="Ng P."/>
            <person name="Nilsson R."/>
            <person name="Nishiguchi S."/>
            <person name="Nishikawa S."/>
            <person name="Nori F."/>
            <person name="Ohara O."/>
            <person name="Okazaki Y."/>
            <person name="Orlando V."/>
            <person name="Pang K.C."/>
            <person name="Pavan W.J."/>
            <person name="Pavesi G."/>
            <person name="Pesole G."/>
            <person name="Petrovsky N."/>
            <person name="Piazza S."/>
            <person name="Reed J."/>
            <person name="Reid J.F."/>
            <person name="Ring B.Z."/>
            <person name="Ringwald M."/>
            <person name="Rost B."/>
            <person name="Ruan Y."/>
            <person name="Salzberg S.L."/>
            <person name="Sandelin A."/>
            <person name="Schneider C."/>
            <person name="Schoenbach C."/>
            <person name="Sekiguchi K."/>
            <person name="Semple C.A."/>
            <person name="Seno S."/>
            <person name="Sessa L."/>
            <person name="Sheng Y."/>
            <person name="Shibata Y."/>
            <person name="Shimada H."/>
            <person name="Shimada K."/>
            <person name="Silva D."/>
            <person name="Sinclair B."/>
            <person name="Sperling S."/>
            <person name="Stupka E."/>
            <person name="Sugiura K."/>
            <person name="Sultana R."/>
            <person name="Takenaka Y."/>
            <person name="Taki K."/>
            <person name="Tammoja K."/>
            <person name="Tan S.L."/>
            <person name="Tang S."/>
            <person name="Taylor M.S."/>
            <person name="Tegner J."/>
            <person name="Teichmann S.A."/>
            <person name="Ueda H.R."/>
            <person name="van Nimwegen E."/>
            <person name="Verardo R."/>
            <person name="Wei C.L."/>
            <person name="Yagi K."/>
            <person name="Yamanishi H."/>
            <person name="Zabarovsky E."/>
            <person name="Zhu S."/>
            <person name="Zimmer A."/>
            <person name="Hide W."/>
            <person name="Bult C."/>
            <person name="Grimmond S.M."/>
            <person name="Teasdale R.D."/>
            <person name="Liu E.T."/>
            <person name="Brusic V."/>
            <person name="Quackenbush J."/>
            <person name="Wahlestedt C."/>
            <person name="Mattick J.S."/>
            <person name="Hume D.A."/>
            <person name="Kai C."/>
            <person name="Sasaki D."/>
            <person name="Tomaru Y."/>
            <person name="Fukuda S."/>
            <person name="Kanamori-Katayama M."/>
            <person name="Suzuki M."/>
            <person name="Aoki J."/>
            <person name="Arakawa T."/>
            <person name="Iida J."/>
            <person name="Imamura K."/>
            <person name="Itoh M."/>
            <person name="Kato T."/>
            <person name="Kawaji H."/>
            <person name="Kawagashira N."/>
            <person name="Kawashima T."/>
            <person name="Kojima M."/>
            <person name="Kondo S."/>
            <person name="Konno H."/>
            <person name="Nakano K."/>
            <person name="Ninomiya N."/>
            <person name="Nishio T."/>
            <person name="Okada M."/>
            <person name="Plessy C."/>
            <person name="Shibata K."/>
            <person name="Shiraki T."/>
            <person name="Suzuki S."/>
            <person name="Tagami M."/>
            <person name="Waki K."/>
            <person name="Watahiki A."/>
            <person name="Okamura-Oho Y."/>
            <person name="Suzuki H."/>
            <person name="Kawai J."/>
            <person name="Hayashizaki Y."/>
        </authorList>
    </citation>
    <scope>NUCLEOTIDE SEQUENCE [LARGE SCALE MRNA] (ISOFORM 1)</scope>
    <source>
        <strain>C57BL/6J</strain>
        <tissue>Stomach</tissue>
    </source>
</reference>
<reference key="2">
    <citation type="submission" date="2004-09" db="EMBL/GenBank/DDBJ databases">
        <title>The murine ortholog of the SHP-2 binding molecule, PZR, is expressed during mesodermal commitment and accelerates cell migration on fibronectin.</title>
        <authorList>
            <person name="Roubelakis M.G."/>
            <person name="Martin-Rendon E."/>
            <person name="Tsaknakis G."/>
            <person name="Watt S.M."/>
        </authorList>
    </citation>
    <scope>NUCLEOTIDE SEQUENCE [MRNA] (ISOFORMS 1 AND 2)</scope>
</reference>
<reference key="3">
    <citation type="journal article" date="2004" name="Genome Res.">
        <title>The status, quality, and expansion of the NIH full-length cDNA project: the Mammalian Gene Collection (MGC).</title>
        <authorList>
            <consortium name="The MGC Project Team"/>
        </authorList>
    </citation>
    <scope>NUCLEOTIDE SEQUENCE [LARGE SCALE MRNA] (ISOFORM 2)</scope>
    <source>
        <strain>C57BL/6J</strain>
        <tissue>Brain</tissue>
    </source>
</reference>
<reference key="4">
    <citation type="journal article" date="2009" name="Nat. Biotechnol.">
        <title>Mass-spectrometric identification and relative quantification of N-linked cell surface glycoproteins.</title>
        <authorList>
            <person name="Wollscheid B."/>
            <person name="Bausch-Fluck D."/>
            <person name="Henderson C."/>
            <person name="O'Brien R."/>
            <person name="Bibel M."/>
            <person name="Schiess R."/>
            <person name="Aebersold R."/>
            <person name="Watts J.D."/>
        </authorList>
    </citation>
    <scope>GLYCOSYLATION [LARGE SCALE ANALYSIS] AT ASN-130</scope>
</reference>
<protein>
    <recommendedName>
        <fullName>Myelin protein zero-like protein 1</fullName>
    </recommendedName>
    <alternativeName>
        <fullName>Protein zero-related</fullName>
    </alternativeName>
</protein>
<keyword id="KW-0025">Alternative splicing</keyword>
<keyword id="KW-1015">Disulfide bond</keyword>
<keyword id="KW-0325">Glycoprotein</keyword>
<keyword id="KW-0393">Immunoglobulin domain</keyword>
<keyword id="KW-0472">Membrane</keyword>
<keyword id="KW-0597">Phosphoprotein</keyword>
<keyword id="KW-1185">Reference proteome</keyword>
<keyword id="KW-0732">Signal</keyword>
<keyword id="KW-0812">Transmembrane</keyword>
<keyword id="KW-1133">Transmembrane helix</keyword>
<evidence type="ECO:0000250" key="1"/>
<evidence type="ECO:0000250" key="2">
    <source>
        <dbReference type="UniProtKB" id="O95297"/>
    </source>
</evidence>
<evidence type="ECO:0000255" key="3"/>
<evidence type="ECO:0000255" key="4">
    <source>
        <dbReference type="PROSITE-ProRule" id="PRU00114"/>
    </source>
</evidence>
<evidence type="ECO:0000256" key="5">
    <source>
        <dbReference type="SAM" id="MobiDB-lite"/>
    </source>
</evidence>
<evidence type="ECO:0000269" key="6">
    <source>
    </source>
</evidence>
<evidence type="ECO:0000303" key="7">
    <source>
    </source>
</evidence>
<evidence type="ECO:0000303" key="8">
    <source ref="2"/>
</evidence>
<evidence type="ECO:0000305" key="9"/>
<organism>
    <name type="scientific">Mus musculus</name>
    <name type="common">Mouse</name>
    <dbReference type="NCBI Taxonomy" id="10090"/>
    <lineage>
        <taxon>Eukaryota</taxon>
        <taxon>Metazoa</taxon>
        <taxon>Chordata</taxon>
        <taxon>Craniata</taxon>
        <taxon>Vertebrata</taxon>
        <taxon>Euteleostomi</taxon>
        <taxon>Mammalia</taxon>
        <taxon>Eutheria</taxon>
        <taxon>Euarchontoglires</taxon>
        <taxon>Glires</taxon>
        <taxon>Rodentia</taxon>
        <taxon>Myomorpha</taxon>
        <taxon>Muroidea</taxon>
        <taxon>Muridae</taxon>
        <taxon>Murinae</taxon>
        <taxon>Mus</taxon>
        <taxon>Mus</taxon>
    </lineage>
</organism>
<sequence>MAEAVGAVALIAAPARRRWLWSVLAAMLGLLTARISALEVHTPKEIFVVNGTQGKLTCTFDSPNTTGWLTTVSWSFQPDGTDSAVSFFHYSQGQVYIGDYPPFKDRVTWAGDLDKKDASINIENIQAVHNGTYICDVKNPPDIVVRPGHIRLHVVEIDNLLVFLVWVVVGTVTAVVLGLTLLISLVLVVLYRRKHSKRDYTGCSTSERLSPVKQAPRKCPSDTEGLVKSPPSAGSHQGPVIYAQLDHSGGHHSGKINKSESVVYADIRKD</sequence>
<proteinExistence type="evidence at protein level"/>
<feature type="signal peptide" evidence="3">
    <location>
        <begin position="1"/>
        <end position="35"/>
    </location>
</feature>
<feature type="chain" id="PRO_0000240336" description="Myelin protein zero-like protein 1">
    <location>
        <begin position="36"/>
        <end position="270"/>
    </location>
</feature>
<feature type="topological domain" description="Extracellular" evidence="3">
    <location>
        <begin position="36"/>
        <end position="162"/>
    </location>
</feature>
<feature type="transmembrane region" description="Helical" evidence="3">
    <location>
        <begin position="163"/>
        <end position="183"/>
    </location>
</feature>
<feature type="topological domain" description="Cytoplasmic" evidence="3">
    <location>
        <begin position="184"/>
        <end position="270"/>
    </location>
</feature>
<feature type="domain" description="Ig-like V-type">
    <location>
        <begin position="36"/>
        <end position="151"/>
    </location>
</feature>
<feature type="region of interest" description="Disordered" evidence="5">
    <location>
        <begin position="201"/>
        <end position="257"/>
    </location>
</feature>
<feature type="short sequence motif" description="ITIM motif 1">
    <location>
        <begin position="240"/>
        <end position="245"/>
    </location>
</feature>
<feature type="short sequence motif" description="ITIM motif 2">
    <location>
        <begin position="262"/>
        <end position="267"/>
    </location>
</feature>
<feature type="modified residue" description="Phosphoserine" evidence="2">
    <location>
        <position position="204"/>
    </location>
</feature>
<feature type="modified residue" description="Phosphoserine" evidence="2">
    <location>
        <position position="206"/>
    </location>
</feature>
<feature type="modified residue" description="Phosphoserine" evidence="2">
    <location>
        <position position="210"/>
    </location>
</feature>
<feature type="modified residue" description="Phosphoserine" evidence="2">
    <location>
        <position position="221"/>
    </location>
</feature>
<feature type="modified residue" description="Phosphotyrosine" evidence="2">
    <location>
        <position position="242"/>
    </location>
</feature>
<feature type="modified residue" description="Phosphoserine" evidence="2">
    <location>
        <position position="261"/>
    </location>
</feature>
<feature type="modified residue" description="Phosphotyrosine" evidence="2">
    <location>
        <position position="264"/>
    </location>
</feature>
<feature type="glycosylation site" description="N-linked (GlcNAc...) asparagine" evidence="3">
    <location>
        <position position="50"/>
    </location>
</feature>
<feature type="glycosylation site" description="N-linked (GlcNAc...) asparagine" evidence="6">
    <location>
        <position position="130"/>
    </location>
</feature>
<feature type="disulfide bond" evidence="4">
    <location>
        <begin position="58"/>
        <end position="135"/>
    </location>
</feature>
<feature type="splice variant" id="VSP_019345" description="In isoform 2." evidence="7 8">
    <original>CSTSERLSPVKQAPRKCPSDTEGLVKSPPSAGSHQGPVIYAQLDHSGGHHSGKINKSESVVYADIRKD</original>
    <variation>AQSFT</variation>
    <location>
        <begin position="203"/>
        <end position="270"/>
    </location>
</feature>
<feature type="sequence conflict" description="In Ref. 2; AAX11678." evidence="9" ref="2">
    <original>G</original>
    <variation>GFIS</variation>
    <location>
        <position position="202"/>
    </location>
</feature>
<accession>Q3TEW6</accession>
<accession>Q2VW02</accession>
<accession>Q6GQX5</accession>
<gene>
    <name type="primary">Mpzl1</name>
    <name type="synonym">Pzr</name>
</gene>
<comment type="function">
    <text evidence="1">Cell surface receptor, which is involved in signal transduction processes. Recruits PTPN11/SHP-2 to the cell membrane and is a putative substrate of PTPN11/SHP-2. Is a major receptor for concanavalin-A (ConA) and is involved in cellular signaling induced by ConA, which probably includes Src family tyrosine-protein kinases. Isoform 2 seems to have a dominant negative role; it blocks tyrosine phosphorylation of MPZL1 induced by ConA. Isoform 1, but not isoform 2, may be involved in regulation of integrin-mediated cell motility (By similarity).</text>
</comment>
<comment type="subunit">
    <text evidence="1">Interacts with phosphorylated PTPN11/SHP-2.</text>
</comment>
<comment type="subcellular location">
    <subcellularLocation>
        <location evidence="9">Membrane</location>
        <topology evidence="9">Single-pass type I membrane protein</topology>
    </subcellularLocation>
</comment>
<comment type="alternative products">
    <event type="alternative splicing"/>
    <isoform>
        <id>Q3TEW6-1</id>
        <name>1</name>
        <sequence type="displayed"/>
    </isoform>
    <isoform>
        <id>Q3TEW6-2</id>
        <name>2</name>
        <name>b</name>
        <sequence type="described" ref="VSP_019345"/>
    </isoform>
</comment>
<comment type="domain">
    <text>Contains 2 copies of a cytoplasmic motif that is referred to as the immunoreceptor tyrosine-based inhibitor motif (ITIM). This motif is involved in modulation of cellular responses. The phosphorylated ITIM motif can bind the SH2 domain of several SH2-containing phosphatases.</text>
</comment>
<comment type="PTM">
    <text evidence="1">Phosphorylated on tyrosine residues upon stimulation with pervanadate and concanavalin-A (ConA). Phosphorylation at Tyr-242 and Tyr-264 is required for interaction with PTPN11/SHP-2. Dephosphorylated by PTPN11/SHP-2 (in vitro) (By similarity).</text>
</comment>
<comment type="similarity">
    <text evidence="9">Belongs to the myelin P0 protein family.</text>
</comment>
<name>MPZL1_MOUSE</name>
<dbReference type="EMBL" id="AK169385">
    <property type="protein sequence ID" value="BAE41132.1"/>
    <property type="molecule type" value="mRNA"/>
</dbReference>
<dbReference type="EMBL" id="AY764247">
    <property type="protein sequence ID" value="AAX11678.1"/>
    <property type="molecule type" value="mRNA"/>
</dbReference>
<dbReference type="EMBL" id="AY764248">
    <property type="protein sequence ID" value="AAX11679.1"/>
    <property type="molecule type" value="mRNA"/>
</dbReference>
<dbReference type="EMBL" id="BC072563">
    <property type="protein sequence ID" value="AAH72563.1"/>
    <property type="molecule type" value="mRNA"/>
</dbReference>
<dbReference type="CCDS" id="CCDS35757.1">
    <molecule id="Q3TEW6-1"/>
</dbReference>
<dbReference type="RefSeq" id="NP_001001880.1">
    <property type="nucleotide sequence ID" value="NM_001001880.2"/>
</dbReference>
<dbReference type="RefSeq" id="NP_001077366.1">
    <molecule id="Q3TEW6-1"/>
    <property type="nucleotide sequence ID" value="NM_001083897.1"/>
</dbReference>
<dbReference type="SMR" id="Q3TEW6"/>
<dbReference type="BioGRID" id="212877">
    <property type="interactions" value="1"/>
</dbReference>
<dbReference type="FunCoup" id="Q3TEW6">
    <property type="interactions" value="1422"/>
</dbReference>
<dbReference type="STRING" id="10090.ENSMUSP00000107062"/>
<dbReference type="GlyConnect" id="2521">
    <property type="glycosylation" value="2 N-Linked glycans (2 sites)"/>
</dbReference>
<dbReference type="GlyCosmos" id="Q3TEW6">
    <property type="glycosylation" value="2 sites, 2 glycans"/>
</dbReference>
<dbReference type="GlyGen" id="Q3TEW6">
    <property type="glycosylation" value="2 sites, 4 N-linked glycans (2 sites)"/>
</dbReference>
<dbReference type="iPTMnet" id="Q3TEW6"/>
<dbReference type="PhosphoSitePlus" id="Q3TEW6"/>
<dbReference type="PaxDb" id="10090-ENSMUSP00000107062"/>
<dbReference type="PeptideAtlas" id="Q3TEW6"/>
<dbReference type="ProteomicsDB" id="252611">
    <molecule id="Q3TEW6-1"/>
</dbReference>
<dbReference type="ProteomicsDB" id="252612">
    <molecule id="Q3TEW6-2"/>
</dbReference>
<dbReference type="Pumba" id="Q3TEW6"/>
<dbReference type="Antibodypedia" id="34343">
    <property type="antibodies" value="131 antibodies from 28 providers"/>
</dbReference>
<dbReference type="DNASU" id="68481"/>
<dbReference type="Ensembl" id="ENSMUST00000111435.9">
    <molecule id="Q3TEW6-1"/>
    <property type="protein sequence ID" value="ENSMUSP00000107062.3"/>
    <property type="gene ID" value="ENSMUSG00000026566.16"/>
</dbReference>
<dbReference type="GeneID" id="68481"/>
<dbReference type="KEGG" id="mmu:68481"/>
<dbReference type="UCSC" id="uc007djh.1">
    <molecule id="Q3TEW6-1"/>
    <property type="organism name" value="mouse"/>
</dbReference>
<dbReference type="UCSC" id="uc007dji.1">
    <molecule id="Q3TEW6-2"/>
    <property type="organism name" value="mouse"/>
</dbReference>
<dbReference type="AGR" id="MGI:1915731"/>
<dbReference type="CTD" id="9019"/>
<dbReference type="MGI" id="MGI:1915731">
    <property type="gene designation" value="Mpzl1"/>
</dbReference>
<dbReference type="VEuPathDB" id="HostDB:ENSMUSG00000026566"/>
<dbReference type="eggNOG" id="ENOG502QUEQ">
    <property type="taxonomic scope" value="Eukaryota"/>
</dbReference>
<dbReference type="GeneTree" id="ENSGT01030000234556"/>
<dbReference type="HOGENOM" id="CLU_090350_3_0_1"/>
<dbReference type="InParanoid" id="Q3TEW6"/>
<dbReference type="OMA" id="RDYTGCN"/>
<dbReference type="OrthoDB" id="8831214at2759"/>
<dbReference type="PhylomeDB" id="Q3TEW6"/>
<dbReference type="TreeFam" id="TF331728"/>
<dbReference type="BioGRID-ORCS" id="68481">
    <property type="hits" value="0 hits in 77 CRISPR screens"/>
</dbReference>
<dbReference type="ChiTaRS" id="Mpzl1">
    <property type="organism name" value="mouse"/>
</dbReference>
<dbReference type="PRO" id="PR:Q3TEW6"/>
<dbReference type="Proteomes" id="UP000000589">
    <property type="component" value="Chromosome 1"/>
</dbReference>
<dbReference type="RNAct" id="Q3TEW6">
    <property type="molecule type" value="protein"/>
</dbReference>
<dbReference type="Bgee" id="ENSMUSG00000026566">
    <property type="expression patterns" value="Expressed in otolith organ and 234 other cell types or tissues"/>
</dbReference>
<dbReference type="ExpressionAtlas" id="Q3TEW6">
    <property type="expression patterns" value="baseline and differential"/>
</dbReference>
<dbReference type="GO" id="GO:0016020">
    <property type="term" value="C:membrane"/>
    <property type="evidence" value="ECO:0007669"/>
    <property type="project" value="UniProtKB-SubCell"/>
</dbReference>
<dbReference type="GO" id="GO:0030335">
    <property type="term" value="P:positive regulation of cell migration"/>
    <property type="evidence" value="ECO:0000314"/>
    <property type="project" value="MGI"/>
</dbReference>
<dbReference type="FunFam" id="2.60.40.10:FF:000193">
    <property type="entry name" value="Myelin protein zero-like 1 like"/>
    <property type="match status" value="1"/>
</dbReference>
<dbReference type="Gene3D" id="2.60.40.10">
    <property type="entry name" value="Immunoglobulins"/>
    <property type="match status" value="1"/>
</dbReference>
<dbReference type="InterPro" id="IPR007110">
    <property type="entry name" value="Ig-like_dom"/>
</dbReference>
<dbReference type="InterPro" id="IPR036179">
    <property type="entry name" value="Ig-like_dom_sf"/>
</dbReference>
<dbReference type="InterPro" id="IPR013783">
    <property type="entry name" value="Ig-like_fold"/>
</dbReference>
<dbReference type="InterPro" id="IPR003599">
    <property type="entry name" value="Ig_sub"/>
</dbReference>
<dbReference type="InterPro" id="IPR013106">
    <property type="entry name" value="Ig_V-set"/>
</dbReference>
<dbReference type="InterPro" id="IPR000920">
    <property type="entry name" value="Myelin_P0-rel"/>
</dbReference>
<dbReference type="PANTHER" id="PTHR13869">
    <property type="entry name" value="MYELIN P0 RELATED"/>
    <property type="match status" value="1"/>
</dbReference>
<dbReference type="PANTHER" id="PTHR13869:SF19">
    <property type="entry name" value="MYELIN PROTEIN ZERO-LIKE PROTEIN 1"/>
    <property type="match status" value="1"/>
</dbReference>
<dbReference type="Pfam" id="PF07686">
    <property type="entry name" value="V-set"/>
    <property type="match status" value="1"/>
</dbReference>
<dbReference type="PRINTS" id="PR00213">
    <property type="entry name" value="MYELINP0"/>
</dbReference>
<dbReference type="SMART" id="SM00409">
    <property type="entry name" value="IG"/>
    <property type="match status" value="1"/>
</dbReference>
<dbReference type="SMART" id="SM00406">
    <property type="entry name" value="IGv"/>
    <property type="match status" value="1"/>
</dbReference>
<dbReference type="SUPFAM" id="SSF48726">
    <property type="entry name" value="Immunoglobulin"/>
    <property type="match status" value="1"/>
</dbReference>
<dbReference type="PROSITE" id="PS50835">
    <property type="entry name" value="IG_LIKE"/>
    <property type="match status" value="1"/>
</dbReference>